<proteinExistence type="inferred from homology"/>
<name>MURD_RIPO1</name>
<feature type="chain" id="PRO_1000130851" description="UDP-N-acetylmuramoylalanine--D-glutamate ligase">
    <location>
        <begin position="1"/>
        <end position="456"/>
    </location>
</feature>
<feature type="binding site" evidence="1">
    <location>
        <begin position="113"/>
        <end position="119"/>
    </location>
    <ligand>
        <name>ATP</name>
        <dbReference type="ChEBI" id="CHEBI:30616"/>
    </ligand>
</feature>
<sequence>MATAYIIGLGRSGIAAARLLKIQGWEVILSDRAHSPNLEITQQELGQEGITVKLADHPSLIDSNLPNLIVVSPGVPWDVNFLQEARDRGIDVIGELELAWRSLQSSPWVGITGTNGKTTTTALVAAIFQASGLNAPSCGNIGYAACELALSQTKTKASSFDWIIAEVSSYQIESSRELAPKIGIWTTFTPDHLSRHKTLDNYYAIKASLLRRCELQIFNGDDPYLHQVGLHQWADAYWTTVKGKEHLLCDAAKGVYLQDNWIVAFGELIAPLNLFKMVGVHNQQNLLMAVGAARLAGIEKGAIAQAIATFKGVPHRLELITNIDGIDFINDSKATNYDAAEVGLVSVNASVILIAGGEAKEGDDRRWIEQIKAKVATVLLIGEAATAFAQRLQQSNYEAYEIVETMDNAVKRGLELAKKQQAKVVLLSPACASFDQYQSFEHRGDHFRQLCQALKE</sequence>
<evidence type="ECO:0000255" key="1">
    <source>
        <dbReference type="HAMAP-Rule" id="MF_00639"/>
    </source>
</evidence>
<accession>B7K318</accession>
<protein>
    <recommendedName>
        <fullName evidence="1">UDP-N-acetylmuramoylalanine--D-glutamate ligase</fullName>
        <ecNumber evidence="1">6.3.2.9</ecNumber>
    </recommendedName>
    <alternativeName>
        <fullName evidence="1">D-glutamic acid-adding enzyme</fullName>
    </alternativeName>
    <alternativeName>
        <fullName evidence="1">UDP-N-acetylmuramoyl-L-alanyl-D-glutamate synthetase</fullName>
    </alternativeName>
</protein>
<dbReference type="EC" id="6.3.2.9" evidence="1"/>
<dbReference type="EMBL" id="CP001287">
    <property type="protein sequence ID" value="ACK67719.1"/>
    <property type="molecule type" value="Genomic_DNA"/>
</dbReference>
<dbReference type="RefSeq" id="WP_012596977.1">
    <property type="nucleotide sequence ID" value="NC_011726.1"/>
</dbReference>
<dbReference type="SMR" id="B7K318"/>
<dbReference type="STRING" id="41431.PCC8801_3769"/>
<dbReference type="KEGG" id="cyp:PCC8801_3769"/>
<dbReference type="eggNOG" id="COG0771">
    <property type="taxonomic scope" value="Bacteria"/>
</dbReference>
<dbReference type="HOGENOM" id="CLU_032540_0_0_3"/>
<dbReference type="OrthoDB" id="9809796at2"/>
<dbReference type="UniPathway" id="UPA00219"/>
<dbReference type="Proteomes" id="UP000008204">
    <property type="component" value="Chromosome"/>
</dbReference>
<dbReference type="GO" id="GO:0005737">
    <property type="term" value="C:cytoplasm"/>
    <property type="evidence" value="ECO:0007669"/>
    <property type="project" value="UniProtKB-SubCell"/>
</dbReference>
<dbReference type="GO" id="GO:0005524">
    <property type="term" value="F:ATP binding"/>
    <property type="evidence" value="ECO:0007669"/>
    <property type="project" value="UniProtKB-UniRule"/>
</dbReference>
<dbReference type="GO" id="GO:0008764">
    <property type="term" value="F:UDP-N-acetylmuramoylalanine-D-glutamate ligase activity"/>
    <property type="evidence" value="ECO:0007669"/>
    <property type="project" value="UniProtKB-UniRule"/>
</dbReference>
<dbReference type="GO" id="GO:0051301">
    <property type="term" value="P:cell division"/>
    <property type="evidence" value="ECO:0007669"/>
    <property type="project" value="UniProtKB-KW"/>
</dbReference>
<dbReference type="GO" id="GO:0071555">
    <property type="term" value="P:cell wall organization"/>
    <property type="evidence" value="ECO:0007669"/>
    <property type="project" value="UniProtKB-KW"/>
</dbReference>
<dbReference type="GO" id="GO:0009252">
    <property type="term" value="P:peptidoglycan biosynthetic process"/>
    <property type="evidence" value="ECO:0007669"/>
    <property type="project" value="UniProtKB-UniRule"/>
</dbReference>
<dbReference type="GO" id="GO:0008360">
    <property type="term" value="P:regulation of cell shape"/>
    <property type="evidence" value="ECO:0007669"/>
    <property type="project" value="UniProtKB-KW"/>
</dbReference>
<dbReference type="Gene3D" id="3.90.190.20">
    <property type="entry name" value="Mur ligase, C-terminal domain"/>
    <property type="match status" value="1"/>
</dbReference>
<dbReference type="Gene3D" id="3.40.1190.10">
    <property type="entry name" value="Mur-like, catalytic domain"/>
    <property type="match status" value="1"/>
</dbReference>
<dbReference type="Gene3D" id="3.40.50.720">
    <property type="entry name" value="NAD(P)-binding Rossmann-like Domain"/>
    <property type="match status" value="1"/>
</dbReference>
<dbReference type="HAMAP" id="MF_00639">
    <property type="entry name" value="MurD"/>
    <property type="match status" value="1"/>
</dbReference>
<dbReference type="InterPro" id="IPR036565">
    <property type="entry name" value="Mur-like_cat_sf"/>
</dbReference>
<dbReference type="InterPro" id="IPR004101">
    <property type="entry name" value="Mur_ligase_C"/>
</dbReference>
<dbReference type="InterPro" id="IPR036615">
    <property type="entry name" value="Mur_ligase_C_dom_sf"/>
</dbReference>
<dbReference type="InterPro" id="IPR013221">
    <property type="entry name" value="Mur_ligase_cen"/>
</dbReference>
<dbReference type="InterPro" id="IPR005762">
    <property type="entry name" value="MurD"/>
</dbReference>
<dbReference type="NCBIfam" id="TIGR01087">
    <property type="entry name" value="murD"/>
    <property type="match status" value="1"/>
</dbReference>
<dbReference type="PANTHER" id="PTHR43692">
    <property type="entry name" value="UDP-N-ACETYLMURAMOYLALANINE--D-GLUTAMATE LIGASE"/>
    <property type="match status" value="1"/>
</dbReference>
<dbReference type="PANTHER" id="PTHR43692:SF1">
    <property type="entry name" value="UDP-N-ACETYLMURAMOYLALANINE--D-GLUTAMATE LIGASE"/>
    <property type="match status" value="1"/>
</dbReference>
<dbReference type="Pfam" id="PF02875">
    <property type="entry name" value="Mur_ligase_C"/>
    <property type="match status" value="1"/>
</dbReference>
<dbReference type="Pfam" id="PF08245">
    <property type="entry name" value="Mur_ligase_M"/>
    <property type="match status" value="1"/>
</dbReference>
<dbReference type="Pfam" id="PF21799">
    <property type="entry name" value="MurD-like_N"/>
    <property type="match status" value="1"/>
</dbReference>
<dbReference type="SUPFAM" id="SSF51984">
    <property type="entry name" value="MurCD N-terminal domain"/>
    <property type="match status" value="1"/>
</dbReference>
<dbReference type="SUPFAM" id="SSF53623">
    <property type="entry name" value="MurD-like peptide ligases, catalytic domain"/>
    <property type="match status" value="1"/>
</dbReference>
<dbReference type="SUPFAM" id="SSF53244">
    <property type="entry name" value="MurD-like peptide ligases, peptide-binding domain"/>
    <property type="match status" value="1"/>
</dbReference>
<keyword id="KW-0067">ATP-binding</keyword>
<keyword id="KW-0131">Cell cycle</keyword>
<keyword id="KW-0132">Cell division</keyword>
<keyword id="KW-0133">Cell shape</keyword>
<keyword id="KW-0961">Cell wall biogenesis/degradation</keyword>
<keyword id="KW-0963">Cytoplasm</keyword>
<keyword id="KW-0436">Ligase</keyword>
<keyword id="KW-0547">Nucleotide-binding</keyword>
<keyword id="KW-0573">Peptidoglycan synthesis</keyword>
<keyword id="KW-1185">Reference proteome</keyword>
<gene>
    <name evidence="1" type="primary">murD</name>
    <name type="ordered locus">PCC8801_3769</name>
</gene>
<reference key="1">
    <citation type="journal article" date="2011" name="MBio">
        <title>Novel metabolic attributes of the genus Cyanothece, comprising a group of unicellular nitrogen-fixing Cyanobacteria.</title>
        <authorList>
            <person name="Bandyopadhyay A."/>
            <person name="Elvitigala T."/>
            <person name="Welsh E."/>
            <person name="Stockel J."/>
            <person name="Liberton M."/>
            <person name="Min H."/>
            <person name="Sherman L.A."/>
            <person name="Pakrasi H.B."/>
        </authorList>
    </citation>
    <scope>NUCLEOTIDE SEQUENCE [LARGE SCALE GENOMIC DNA]</scope>
    <source>
        <strain>PCC 8801 / RF-1</strain>
    </source>
</reference>
<comment type="function">
    <text evidence="1">Cell wall formation. Catalyzes the addition of glutamate to the nucleotide precursor UDP-N-acetylmuramoyl-L-alanine (UMA).</text>
</comment>
<comment type="catalytic activity">
    <reaction evidence="1">
        <text>UDP-N-acetyl-alpha-D-muramoyl-L-alanine + D-glutamate + ATP = UDP-N-acetyl-alpha-D-muramoyl-L-alanyl-D-glutamate + ADP + phosphate + H(+)</text>
        <dbReference type="Rhea" id="RHEA:16429"/>
        <dbReference type="ChEBI" id="CHEBI:15378"/>
        <dbReference type="ChEBI" id="CHEBI:29986"/>
        <dbReference type="ChEBI" id="CHEBI:30616"/>
        <dbReference type="ChEBI" id="CHEBI:43474"/>
        <dbReference type="ChEBI" id="CHEBI:83898"/>
        <dbReference type="ChEBI" id="CHEBI:83900"/>
        <dbReference type="ChEBI" id="CHEBI:456216"/>
        <dbReference type="EC" id="6.3.2.9"/>
    </reaction>
</comment>
<comment type="pathway">
    <text evidence="1">Cell wall biogenesis; peptidoglycan biosynthesis.</text>
</comment>
<comment type="subcellular location">
    <subcellularLocation>
        <location evidence="1">Cytoplasm</location>
    </subcellularLocation>
</comment>
<comment type="similarity">
    <text evidence="1">Belongs to the MurCDEF family.</text>
</comment>
<organism>
    <name type="scientific">Rippkaea orientalis (strain PCC 8801 / RF-1)</name>
    <name type="common">Cyanothece sp. (strain PCC 8801)</name>
    <dbReference type="NCBI Taxonomy" id="41431"/>
    <lineage>
        <taxon>Bacteria</taxon>
        <taxon>Bacillati</taxon>
        <taxon>Cyanobacteriota</taxon>
        <taxon>Cyanophyceae</taxon>
        <taxon>Oscillatoriophycideae</taxon>
        <taxon>Chroococcales</taxon>
        <taxon>Aphanothecaceae</taxon>
        <taxon>Rippkaea</taxon>
        <taxon>Rippkaea orientalis</taxon>
    </lineage>
</organism>